<organism>
    <name type="scientific">Homo sapiens</name>
    <name type="common">Human</name>
    <dbReference type="NCBI Taxonomy" id="9606"/>
    <lineage>
        <taxon>Eukaryota</taxon>
        <taxon>Metazoa</taxon>
        <taxon>Chordata</taxon>
        <taxon>Craniata</taxon>
        <taxon>Vertebrata</taxon>
        <taxon>Euteleostomi</taxon>
        <taxon>Mammalia</taxon>
        <taxon>Eutheria</taxon>
        <taxon>Euarchontoglires</taxon>
        <taxon>Primates</taxon>
        <taxon>Haplorrhini</taxon>
        <taxon>Catarrhini</taxon>
        <taxon>Hominidae</taxon>
        <taxon>Homo</taxon>
    </lineage>
</organism>
<dbReference type="EC" id="2.3.1.155" evidence="11 12 13 14"/>
<dbReference type="EC" id="2.3.1.16" evidence="5 11 12 13 14"/>
<dbReference type="EMBL" id="D16481">
    <property type="protein sequence ID" value="BAA03942.1"/>
    <property type="molecule type" value="mRNA"/>
</dbReference>
<dbReference type="EMBL" id="D86850">
    <property type="protein sequence ID" value="BAA22061.1"/>
    <property type="status" value="ALT_SEQ"/>
    <property type="molecule type" value="Genomic_DNA"/>
</dbReference>
<dbReference type="EMBL" id="AF113209">
    <property type="protein sequence ID" value="AAG39280.1"/>
    <property type="molecule type" value="mRNA"/>
</dbReference>
<dbReference type="EMBL" id="AK304455">
    <property type="protein sequence ID" value="BAG65272.1"/>
    <property type="molecule type" value="mRNA"/>
</dbReference>
<dbReference type="EMBL" id="AK314455">
    <property type="protein sequence ID" value="BAG37063.1"/>
    <property type="molecule type" value="mRNA"/>
</dbReference>
<dbReference type="EMBL" id="AC010896">
    <property type="protein sequence ID" value="AAY14644.1"/>
    <property type="molecule type" value="Genomic_DNA"/>
</dbReference>
<dbReference type="EMBL" id="BC014572">
    <property type="protein sequence ID" value="AAH14572.1"/>
    <property type="molecule type" value="mRNA"/>
</dbReference>
<dbReference type="EMBL" id="BC017564">
    <property type="protein sequence ID" value="AAH17564.1"/>
    <property type="molecule type" value="mRNA"/>
</dbReference>
<dbReference type="EMBL" id="BC030824">
    <property type="protein sequence ID" value="AAH30824.1"/>
    <property type="molecule type" value="mRNA"/>
</dbReference>
<dbReference type="EMBL" id="BC066963">
    <property type="protein sequence ID" value="AAH66963.1"/>
    <property type="molecule type" value="mRNA"/>
</dbReference>
<dbReference type="CCDS" id="CCDS1722.1">
    <molecule id="P55084-1"/>
</dbReference>
<dbReference type="CCDS" id="CCDS62872.1">
    <molecule id="P55084-2"/>
</dbReference>
<dbReference type="PIR" id="JC2109">
    <property type="entry name" value="JC2109"/>
</dbReference>
<dbReference type="RefSeq" id="NP_000174.1">
    <molecule id="P55084-1"/>
    <property type="nucleotide sequence ID" value="NM_000183.3"/>
</dbReference>
<dbReference type="RefSeq" id="NP_001268441.1">
    <property type="nucleotide sequence ID" value="NM_001281512.1"/>
</dbReference>
<dbReference type="RefSeq" id="NP_001268442.1">
    <molecule id="P55084-2"/>
    <property type="nucleotide sequence ID" value="NM_001281513.2"/>
</dbReference>
<dbReference type="RefSeq" id="XP_011531105.1">
    <molecule id="P55084-1"/>
    <property type="nucleotide sequence ID" value="XM_011532803.2"/>
</dbReference>
<dbReference type="PDB" id="5ZQZ">
    <property type="method" value="EM"/>
    <property type="resolution" value="4.20 A"/>
    <property type="chains" value="B/D=1-474"/>
</dbReference>
<dbReference type="PDB" id="5ZRV">
    <property type="method" value="EM"/>
    <property type="resolution" value="7.70 A"/>
    <property type="chains" value="B/D/F/H=1-474"/>
</dbReference>
<dbReference type="PDB" id="6DV2">
    <property type="method" value="X-ray"/>
    <property type="resolution" value="3.60 A"/>
    <property type="chains" value="A/B/C/D/E/F=34-474"/>
</dbReference>
<dbReference type="PDBsum" id="5ZQZ"/>
<dbReference type="PDBsum" id="5ZRV"/>
<dbReference type="PDBsum" id="6DV2"/>
<dbReference type="EMDB" id="EMD-6940"/>
<dbReference type="EMDB" id="EMD-6944"/>
<dbReference type="SMR" id="P55084"/>
<dbReference type="BioGRID" id="109282">
    <property type="interactions" value="480"/>
</dbReference>
<dbReference type="ComplexPortal" id="CPX-6245">
    <property type="entry name" value="Mitochondrial trifunctional enzyme complex"/>
</dbReference>
<dbReference type="CORUM" id="P55084"/>
<dbReference type="FunCoup" id="P55084">
    <property type="interactions" value="2308"/>
</dbReference>
<dbReference type="IntAct" id="P55084">
    <property type="interactions" value="167"/>
</dbReference>
<dbReference type="MINT" id="P55084"/>
<dbReference type="STRING" id="9606.ENSP00000325136"/>
<dbReference type="ChEMBL" id="CHEMBL4523245"/>
<dbReference type="MoonProt" id="P55084"/>
<dbReference type="GlyGen" id="P55084">
    <property type="glycosylation" value="1 site, 1 O-linked glycan (1 site)"/>
</dbReference>
<dbReference type="iPTMnet" id="P55084"/>
<dbReference type="MetOSite" id="P55084"/>
<dbReference type="PhosphoSitePlus" id="P55084"/>
<dbReference type="SwissPalm" id="P55084"/>
<dbReference type="BioMuta" id="HADHB"/>
<dbReference type="DMDM" id="116241345"/>
<dbReference type="jPOST" id="P55084"/>
<dbReference type="MassIVE" id="P55084"/>
<dbReference type="PaxDb" id="9606-ENSP00000325136"/>
<dbReference type="PeptideAtlas" id="P55084"/>
<dbReference type="ProteomicsDB" id="56786">
    <molecule id="P55084-1"/>
</dbReference>
<dbReference type="ProteomicsDB" id="5856"/>
<dbReference type="Pumba" id="P55084"/>
<dbReference type="Antibodypedia" id="27848">
    <property type="antibodies" value="250 antibodies from 30 providers"/>
</dbReference>
<dbReference type="DNASU" id="3032"/>
<dbReference type="Ensembl" id="ENST00000317799.10">
    <molecule id="P55084-1"/>
    <property type="protein sequence ID" value="ENSP00000325136.5"/>
    <property type="gene ID" value="ENSG00000138029.14"/>
</dbReference>
<dbReference type="Ensembl" id="ENST00000545822.2">
    <molecule id="P55084-2"/>
    <property type="protein sequence ID" value="ENSP00000442665.1"/>
    <property type="gene ID" value="ENSG00000138029.14"/>
</dbReference>
<dbReference type="GeneID" id="3032"/>
<dbReference type="KEGG" id="hsa:3032"/>
<dbReference type="MANE-Select" id="ENST00000317799.10">
    <property type="protein sequence ID" value="ENSP00000325136.5"/>
    <property type="RefSeq nucleotide sequence ID" value="NM_000183.3"/>
    <property type="RefSeq protein sequence ID" value="NP_000174.1"/>
</dbReference>
<dbReference type="UCSC" id="uc002rgz.4">
    <molecule id="P55084-1"/>
    <property type="organism name" value="human"/>
</dbReference>
<dbReference type="AGR" id="HGNC:4803"/>
<dbReference type="CTD" id="3032"/>
<dbReference type="DisGeNET" id="3032"/>
<dbReference type="GeneCards" id="HADHB"/>
<dbReference type="HGNC" id="HGNC:4803">
    <property type="gene designation" value="HADHB"/>
</dbReference>
<dbReference type="HPA" id="ENSG00000138029">
    <property type="expression patterns" value="Tissue enhanced (heart muscle, skeletal muscle, tongue)"/>
</dbReference>
<dbReference type="MalaCards" id="HADHB"/>
<dbReference type="MIM" id="143450">
    <property type="type" value="gene"/>
</dbReference>
<dbReference type="MIM" id="620300">
    <property type="type" value="phenotype"/>
</dbReference>
<dbReference type="neXtProt" id="NX_P55084"/>
<dbReference type="OpenTargets" id="ENSG00000138029"/>
<dbReference type="Orphanet" id="746">
    <property type="disease" value="Mitochondrial trifunctional protein deficiency"/>
</dbReference>
<dbReference type="PharmGKB" id="PA29177"/>
<dbReference type="VEuPathDB" id="HostDB:ENSG00000138029"/>
<dbReference type="eggNOG" id="KOG1392">
    <property type="taxonomic scope" value="Eukaryota"/>
</dbReference>
<dbReference type="GeneTree" id="ENSGT01030000234626"/>
<dbReference type="InParanoid" id="P55084"/>
<dbReference type="OMA" id="MTAFPEP"/>
<dbReference type="OrthoDB" id="5404651at2759"/>
<dbReference type="PAN-GO" id="P55084">
    <property type="GO annotations" value="2 GO annotations based on evolutionary models"/>
</dbReference>
<dbReference type="PhylomeDB" id="P55084"/>
<dbReference type="TreeFam" id="TF315243"/>
<dbReference type="BioCyc" id="MetaCyc:HS06436-MONOMER"/>
<dbReference type="PathwayCommons" id="P55084"/>
<dbReference type="Reactome" id="R-HSA-1482798">
    <property type="pathway name" value="Acyl chain remodeling of CL"/>
</dbReference>
<dbReference type="Reactome" id="R-HSA-77285">
    <property type="pathway name" value="Beta oxidation of myristoyl-CoA to lauroyl-CoA"/>
</dbReference>
<dbReference type="Reactome" id="R-HSA-77288">
    <property type="pathway name" value="mitochondrial fatty acid beta-oxidation of unsaturated fatty acids"/>
</dbReference>
<dbReference type="Reactome" id="R-HSA-77305">
    <property type="pathway name" value="Beta oxidation of palmitoyl-CoA to myristoyl-CoA"/>
</dbReference>
<dbReference type="Reactome" id="R-HSA-77310">
    <property type="pathway name" value="Beta oxidation of lauroyl-CoA to decanoyl-CoA-CoA"/>
</dbReference>
<dbReference type="Reactome" id="R-HSA-77346">
    <property type="pathway name" value="Beta oxidation of decanoyl-CoA to octanoyl-CoA-CoA"/>
</dbReference>
<dbReference type="Reactome" id="R-HSA-77348">
    <property type="pathway name" value="Beta oxidation of octanoyl-CoA to hexanoyl-CoA"/>
</dbReference>
<dbReference type="Reactome" id="R-HSA-77350">
    <property type="pathway name" value="Beta oxidation of hexanoyl-CoA to butanoyl-CoA"/>
</dbReference>
<dbReference type="SignaLink" id="P55084"/>
<dbReference type="UniPathway" id="UPA00659"/>
<dbReference type="BioGRID-ORCS" id="3032">
    <property type="hits" value="10 hits in 1152 CRISPR screens"/>
</dbReference>
<dbReference type="CD-CODE" id="FB4E32DD">
    <property type="entry name" value="Presynaptic clusters and postsynaptic densities"/>
</dbReference>
<dbReference type="ChiTaRS" id="HADHB">
    <property type="organism name" value="human"/>
</dbReference>
<dbReference type="GeneWiki" id="HADHB"/>
<dbReference type="GenomeRNAi" id="3032"/>
<dbReference type="Pharos" id="P55084">
    <property type="development level" value="Tbio"/>
</dbReference>
<dbReference type="PRO" id="PR:P55084"/>
<dbReference type="Proteomes" id="UP000005640">
    <property type="component" value="Chromosome 2"/>
</dbReference>
<dbReference type="RNAct" id="P55084">
    <property type="molecule type" value="protein"/>
</dbReference>
<dbReference type="Bgee" id="ENSG00000138029">
    <property type="expression patterns" value="Expressed in heart right ventricle and 209 other cell types or tissues"/>
</dbReference>
<dbReference type="ExpressionAtlas" id="P55084">
    <property type="expression patterns" value="baseline and differential"/>
</dbReference>
<dbReference type="GO" id="GO:0005783">
    <property type="term" value="C:endoplasmic reticulum"/>
    <property type="evidence" value="ECO:0000314"/>
    <property type="project" value="UniProtKB"/>
</dbReference>
<dbReference type="GO" id="GO:0005740">
    <property type="term" value="C:mitochondrial envelope"/>
    <property type="evidence" value="ECO:0000304"/>
    <property type="project" value="ProtInc"/>
</dbReference>
<dbReference type="GO" id="GO:0016507">
    <property type="term" value="C:mitochondrial fatty acid beta-oxidation multienzyme complex"/>
    <property type="evidence" value="ECO:0000353"/>
    <property type="project" value="ComplexPortal"/>
</dbReference>
<dbReference type="GO" id="GO:0005743">
    <property type="term" value="C:mitochondrial inner membrane"/>
    <property type="evidence" value="ECO:0000314"/>
    <property type="project" value="UniProtKB"/>
</dbReference>
<dbReference type="GO" id="GO:0042645">
    <property type="term" value="C:mitochondrial nucleoid"/>
    <property type="evidence" value="ECO:0000314"/>
    <property type="project" value="BHF-UCL"/>
</dbReference>
<dbReference type="GO" id="GO:0005741">
    <property type="term" value="C:mitochondrial outer membrane"/>
    <property type="evidence" value="ECO:0000314"/>
    <property type="project" value="UniProtKB"/>
</dbReference>
<dbReference type="GO" id="GO:0005739">
    <property type="term" value="C:mitochondrion"/>
    <property type="evidence" value="ECO:0000314"/>
    <property type="project" value="HPA"/>
</dbReference>
<dbReference type="GO" id="GO:0005654">
    <property type="term" value="C:nucleoplasm"/>
    <property type="evidence" value="ECO:0000314"/>
    <property type="project" value="HPA"/>
</dbReference>
<dbReference type="GO" id="GO:0003857">
    <property type="term" value="F:3-hydroxyacyl-CoA dehydrogenase activity"/>
    <property type="evidence" value="ECO:0000304"/>
    <property type="project" value="ProtInc"/>
</dbReference>
<dbReference type="GO" id="GO:0003985">
    <property type="term" value="F:acetyl-CoA C-acetyltransferase activity"/>
    <property type="evidence" value="ECO:0000318"/>
    <property type="project" value="GO_Central"/>
</dbReference>
<dbReference type="GO" id="GO:0003988">
    <property type="term" value="F:acetyl-CoA C-acyltransferase activity"/>
    <property type="evidence" value="ECO:0000304"/>
    <property type="project" value="ProtInc"/>
</dbReference>
<dbReference type="GO" id="GO:0050633">
    <property type="term" value="F:acetyl-CoA C-myristoyltransferase activity"/>
    <property type="evidence" value="ECO:0007669"/>
    <property type="project" value="UniProtKB-EC"/>
</dbReference>
<dbReference type="GO" id="GO:0004300">
    <property type="term" value="F:enoyl-CoA hydratase activity"/>
    <property type="evidence" value="ECO:0000304"/>
    <property type="project" value="ProtInc"/>
</dbReference>
<dbReference type="GO" id="GO:0106222">
    <property type="term" value="F:lncRNA binding"/>
    <property type="evidence" value="ECO:0007669"/>
    <property type="project" value="Ensembl"/>
</dbReference>
<dbReference type="GO" id="GO:0044877">
    <property type="term" value="F:protein-containing complex binding"/>
    <property type="evidence" value="ECO:0007669"/>
    <property type="project" value="Ensembl"/>
</dbReference>
<dbReference type="GO" id="GO:0003723">
    <property type="term" value="F:RNA binding"/>
    <property type="evidence" value="ECO:0007005"/>
    <property type="project" value="UniProtKB"/>
</dbReference>
<dbReference type="GO" id="GO:0071222">
    <property type="term" value="P:cellular response to lipopolysaccharide"/>
    <property type="evidence" value="ECO:0007669"/>
    <property type="project" value="Ensembl"/>
</dbReference>
<dbReference type="GO" id="GO:0006635">
    <property type="term" value="P:fatty acid beta-oxidation"/>
    <property type="evidence" value="ECO:0000314"/>
    <property type="project" value="ComplexPortal"/>
</dbReference>
<dbReference type="GO" id="GO:0010467">
    <property type="term" value="P:gene expression"/>
    <property type="evidence" value="ECO:0007669"/>
    <property type="project" value="Ensembl"/>
</dbReference>
<dbReference type="CDD" id="cd00751">
    <property type="entry name" value="thiolase"/>
    <property type="match status" value="1"/>
</dbReference>
<dbReference type="FunFam" id="3.40.47.10:FF:000020">
    <property type="entry name" value="Putative trifunctional enzyme subunit beta mitochondrial"/>
    <property type="match status" value="1"/>
</dbReference>
<dbReference type="Gene3D" id="3.40.47.10">
    <property type="match status" value="1"/>
</dbReference>
<dbReference type="InterPro" id="IPR002155">
    <property type="entry name" value="Thiolase"/>
</dbReference>
<dbReference type="InterPro" id="IPR016039">
    <property type="entry name" value="Thiolase-like"/>
</dbReference>
<dbReference type="InterPro" id="IPR020615">
    <property type="entry name" value="Thiolase_acyl_enz_int_AS"/>
</dbReference>
<dbReference type="InterPro" id="IPR020610">
    <property type="entry name" value="Thiolase_AS"/>
</dbReference>
<dbReference type="InterPro" id="IPR020617">
    <property type="entry name" value="Thiolase_C"/>
</dbReference>
<dbReference type="InterPro" id="IPR020613">
    <property type="entry name" value="Thiolase_CS"/>
</dbReference>
<dbReference type="InterPro" id="IPR020616">
    <property type="entry name" value="Thiolase_N"/>
</dbReference>
<dbReference type="NCBIfam" id="TIGR01930">
    <property type="entry name" value="AcCoA-C-Actrans"/>
    <property type="match status" value="1"/>
</dbReference>
<dbReference type="PANTHER" id="PTHR18919">
    <property type="entry name" value="ACETYL-COA C-ACYLTRANSFERASE"/>
    <property type="match status" value="1"/>
</dbReference>
<dbReference type="PANTHER" id="PTHR18919:SF153">
    <property type="entry name" value="TRIFUNCTIONAL ENZYME SUBUNIT BETA, MITOCHONDRIAL"/>
    <property type="match status" value="1"/>
</dbReference>
<dbReference type="Pfam" id="PF02803">
    <property type="entry name" value="Thiolase_C"/>
    <property type="match status" value="1"/>
</dbReference>
<dbReference type="Pfam" id="PF00108">
    <property type="entry name" value="Thiolase_N"/>
    <property type="match status" value="1"/>
</dbReference>
<dbReference type="SUPFAM" id="SSF53901">
    <property type="entry name" value="Thiolase-like"/>
    <property type="match status" value="2"/>
</dbReference>
<dbReference type="PROSITE" id="PS00098">
    <property type="entry name" value="THIOLASE_1"/>
    <property type="match status" value="1"/>
</dbReference>
<dbReference type="PROSITE" id="PS00737">
    <property type="entry name" value="THIOLASE_2"/>
    <property type="match status" value="1"/>
</dbReference>
<dbReference type="PROSITE" id="PS00099">
    <property type="entry name" value="THIOLASE_3"/>
    <property type="match status" value="1"/>
</dbReference>
<evidence type="ECO:0000250" key="1">
    <source>
        <dbReference type="UniProtKB" id="Q99JY0"/>
    </source>
</evidence>
<evidence type="ECO:0000269" key="2">
    <source>
    </source>
</evidence>
<evidence type="ECO:0000269" key="3">
    <source>
    </source>
</evidence>
<evidence type="ECO:0000269" key="4">
    <source>
    </source>
</evidence>
<evidence type="ECO:0000269" key="5">
    <source>
    </source>
</evidence>
<evidence type="ECO:0000269" key="6">
    <source>
    </source>
</evidence>
<evidence type="ECO:0000269" key="7">
    <source>
    </source>
</evidence>
<evidence type="ECO:0000269" key="8">
    <source>
    </source>
</evidence>
<evidence type="ECO:0000269" key="9">
    <source>
    </source>
</evidence>
<evidence type="ECO:0000269" key="10">
    <source>
    </source>
</evidence>
<evidence type="ECO:0000269" key="11">
    <source>
    </source>
</evidence>
<evidence type="ECO:0000269" key="12">
    <source>
    </source>
</evidence>
<evidence type="ECO:0000269" key="13">
    <source>
    </source>
</evidence>
<evidence type="ECO:0000269" key="14">
    <source>
    </source>
</evidence>
<evidence type="ECO:0000269" key="15">
    <source>
    </source>
</evidence>
<evidence type="ECO:0000303" key="16">
    <source>
    </source>
</evidence>
<evidence type="ECO:0000303" key="17">
    <source>
    </source>
</evidence>
<evidence type="ECO:0000303" key="18">
    <source>
    </source>
</evidence>
<evidence type="ECO:0000305" key="19"/>
<evidence type="ECO:0000305" key="20">
    <source>
    </source>
</evidence>
<evidence type="ECO:0000305" key="21">
    <source>
    </source>
</evidence>
<evidence type="ECO:0007744" key="22">
    <source>
    </source>
</evidence>
<evidence type="ECO:0007744" key="23">
    <source>
    </source>
</evidence>
<protein>
    <recommendedName>
        <fullName>Trifunctional enzyme subunit beta, mitochondrial</fullName>
    </recommendedName>
    <alternativeName>
        <fullName>TP-beta</fullName>
    </alternativeName>
    <domain>
        <recommendedName>
            <fullName>3-ketoacyl-CoA thiolase</fullName>
            <ecNumber evidence="11 12 13 14">2.3.1.155</ecNumber>
            <ecNumber evidence="5 11 12 13 14">2.3.1.16</ecNumber>
        </recommendedName>
        <alternativeName>
            <fullName>Acetyl-CoA acyltransferase</fullName>
        </alternativeName>
        <alternativeName>
            <fullName>Beta-ketothiolase</fullName>
        </alternativeName>
    </domain>
</protein>
<name>ECHB_HUMAN</name>
<comment type="function">
    <text evidence="8 9 12 17 18">Mitochondrial trifunctional enzyme catalyzes the last three of the four reactions of the mitochondrial beta-oxidation pathway (PubMed:29915090, PubMed:30850536, PubMed:8135828). The mitochondrial beta-oxidation pathway is the major energy-producing process in tissues and is performed through four consecutive reactions breaking down fatty acids into acetyl-CoA (PubMed:29915090). Among the enzymes involved in this pathway, the trifunctional enzyme exhibits specificity for long-chain fatty acids (PubMed:30850536). Mitochondrial trifunctional enzyme is a heterotetrameric complex composed of two proteins, the trifunctional enzyme subunit alpha/HADHA carries the 2,3-enoyl-CoA hydratase and the 3-hydroxyacyl-CoA dehydrogenase activities, while the trifunctional enzyme subunit beta/HADHB described here bears the 3-ketoacyl-CoA thiolase activity (PubMed:29915090, PubMed:30850536, PubMed:8135828).</text>
</comment>
<comment type="catalytic activity">
    <reaction evidence="11 12 13 14">
        <text>an acyl-CoA + acetyl-CoA = a 3-oxoacyl-CoA + CoA</text>
        <dbReference type="Rhea" id="RHEA:21564"/>
        <dbReference type="ChEBI" id="CHEBI:57287"/>
        <dbReference type="ChEBI" id="CHEBI:57288"/>
        <dbReference type="ChEBI" id="CHEBI:58342"/>
        <dbReference type="ChEBI" id="CHEBI:90726"/>
        <dbReference type="EC" id="2.3.1.16"/>
    </reaction>
    <physiologicalReaction direction="right-to-left" evidence="12">
        <dbReference type="Rhea" id="RHEA:21566"/>
    </physiologicalReaction>
</comment>
<comment type="catalytic activity">
    <reaction evidence="5">
        <text>butanoyl-CoA + acetyl-CoA = 3-oxohexanoyl-CoA + CoA</text>
        <dbReference type="Rhea" id="RHEA:31111"/>
        <dbReference type="ChEBI" id="CHEBI:57287"/>
        <dbReference type="ChEBI" id="CHEBI:57288"/>
        <dbReference type="ChEBI" id="CHEBI:57371"/>
        <dbReference type="ChEBI" id="CHEBI:62418"/>
    </reaction>
    <physiologicalReaction direction="right-to-left" evidence="12">
        <dbReference type="Rhea" id="RHEA:31113"/>
    </physiologicalReaction>
</comment>
<comment type="catalytic activity">
    <reaction evidence="13">
        <text>hexanoyl-CoA + acetyl-CoA = 3-oxooctanoyl-CoA + CoA</text>
        <dbReference type="Rhea" id="RHEA:31203"/>
        <dbReference type="ChEBI" id="CHEBI:57287"/>
        <dbReference type="ChEBI" id="CHEBI:57288"/>
        <dbReference type="ChEBI" id="CHEBI:62619"/>
        <dbReference type="ChEBI" id="CHEBI:62620"/>
    </reaction>
    <physiologicalReaction direction="right-to-left" evidence="12">
        <dbReference type="Rhea" id="RHEA:31205"/>
    </physiologicalReaction>
</comment>
<comment type="catalytic activity">
    <reaction evidence="5">
        <text>octanoyl-CoA + acetyl-CoA = 3-oxodecanoyl-CoA + CoA</text>
        <dbReference type="Rhea" id="RHEA:31087"/>
        <dbReference type="ChEBI" id="CHEBI:57287"/>
        <dbReference type="ChEBI" id="CHEBI:57288"/>
        <dbReference type="ChEBI" id="CHEBI:57386"/>
        <dbReference type="ChEBI" id="CHEBI:62548"/>
    </reaction>
    <physiologicalReaction direction="right-to-left" evidence="12">
        <dbReference type="Rhea" id="RHEA:31089"/>
    </physiologicalReaction>
</comment>
<comment type="catalytic activity">
    <reaction evidence="13">
        <text>decanoyl-CoA + acetyl-CoA = 3-oxododecanoyl-CoA + CoA</text>
        <dbReference type="Rhea" id="RHEA:31183"/>
        <dbReference type="ChEBI" id="CHEBI:57287"/>
        <dbReference type="ChEBI" id="CHEBI:57288"/>
        <dbReference type="ChEBI" id="CHEBI:61430"/>
        <dbReference type="ChEBI" id="CHEBI:62615"/>
    </reaction>
    <physiologicalReaction direction="right-to-left" evidence="12">
        <dbReference type="Rhea" id="RHEA:31185"/>
    </physiologicalReaction>
</comment>
<comment type="catalytic activity">
    <reaction evidence="5">
        <text>dodecanoyl-CoA + acetyl-CoA = 3-oxotetradecanoyl-CoA + CoA</text>
        <dbReference type="Rhea" id="RHEA:31091"/>
        <dbReference type="ChEBI" id="CHEBI:57287"/>
        <dbReference type="ChEBI" id="CHEBI:57288"/>
        <dbReference type="ChEBI" id="CHEBI:57375"/>
        <dbReference type="ChEBI" id="CHEBI:62543"/>
    </reaction>
    <physiologicalReaction direction="right-to-left" evidence="12">
        <dbReference type="Rhea" id="RHEA:31093"/>
    </physiologicalReaction>
</comment>
<comment type="catalytic activity">
    <reaction evidence="5 11 12 13 14">
        <text>tetradecanoyl-CoA + acetyl-CoA = 3-oxohexadecanoyl-CoA + CoA</text>
        <dbReference type="Rhea" id="RHEA:18161"/>
        <dbReference type="ChEBI" id="CHEBI:57287"/>
        <dbReference type="ChEBI" id="CHEBI:57288"/>
        <dbReference type="ChEBI" id="CHEBI:57349"/>
        <dbReference type="ChEBI" id="CHEBI:57385"/>
        <dbReference type="EC" id="2.3.1.155"/>
    </reaction>
    <physiologicalReaction direction="right-to-left" evidence="12">
        <dbReference type="Rhea" id="RHEA:18163"/>
    </physiologicalReaction>
</comment>
<comment type="pathway">
    <text evidence="12">Lipid metabolism; fatty acid beta-oxidation.</text>
</comment>
<comment type="subunit">
    <text evidence="7 8 9 10 13">Heterotetramer of 2 alpha/HADHA and 2 beta/HADHB subunits; forms the mitochondrial trifunctional enzyme (PubMed:29915090, PubMed:30850536). Also purified as higher order heterooligomers including a 4 alpha/HADHA and 4 beta/HADHB heterooligomer which physiological significance remains unclear (PubMed:29915090, PubMed:8163672). The mitochondrial trifunctional enzyme interacts with MTLN (PubMed:32243843). Interacts with RSAD2/viperin (PubMed:21527675).</text>
</comment>
<comment type="interaction">
    <interactant intactId="EBI-356635">
        <id>P55084</id>
    </interactant>
    <interactant intactId="EBI-746969">
        <id>Q9H0R8</id>
        <label>GABARAPL1</label>
    </interactant>
    <organismsDiffer>false</organismsDiffer>
    <experiments>4</experiments>
</comment>
<comment type="interaction">
    <interactant intactId="EBI-356635">
        <id>P55084</id>
    </interactant>
    <interactant intactId="EBI-356720">
        <id>P40939</id>
        <label>HADHA</label>
    </interactant>
    <organismsDiffer>false</organismsDiffer>
    <experiments>10</experiments>
</comment>
<comment type="subcellular location">
    <subcellularLocation>
        <location evidence="7">Mitochondrion</location>
    </subcellularLocation>
    <subcellularLocation>
        <location evidence="7">Mitochondrion inner membrane</location>
    </subcellularLocation>
    <subcellularLocation>
        <location evidence="7">Mitochondrion outer membrane</location>
    </subcellularLocation>
    <subcellularLocation>
        <location evidence="7">Endoplasmic reticulum</location>
    </subcellularLocation>
    <text evidence="8">Protein stability and association with membranes require HADHA.</text>
</comment>
<comment type="alternative products">
    <event type="alternative splicing"/>
    <isoform>
        <id>P55084-1</id>
        <name>1</name>
        <sequence type="displayed"/>
    </isoform>
    <isoform>
        <id>P55084-2</id>
        <name>2</name>
        <sequence type="described" ref="VSP_054426"/>
    </isoform>
</comment>
<comment type="disease" evidence="3 14 15">
    <disease id="DI-06635">
        <name>Mitochondrial trifunctional protein deficiency 2</name>
        <acronym>MTPD2</acronym>
        <description>An autosomal recessive metabolic disorder of long-chain fatty acid oxidation, biochemically characterized by loss of all enzyme activities of the mitochondrial trifunctional protein complex. The disease phenotype ranges from a fatal form characterized by early-onset cardiomyopathy, cardiac failure and early death to less severe, late-onset forms with myopathy, recurrent rhabdomyolysis, and sensorimotor axonal neuropathy as key features.</description>
        <dbReference type="MIM" id="620300"/>
    </disease>
    <text>The disease is caused by variants affecting the gene represented in this entry.</text>
</comment>
<comment type="similarity">
    <text evidence="19">Belongs to the thiolase-like superfamily. Thiolase family.</text>
</comment>
<comment type="sequence caution" evidence="19">
    <conflict type="erroneous gene model prediction">
        <sequence resource="EMBL-CDS" id="BAA22061"/>
    </conflict>
</comment>
<keyword id="KW-0002">3D-structure</keyword>
<keyword id="KW-0007">Acetylation</keyword>
<keyword id="KW-0012">Acyltransferase</keyword>
<keyword id="KW-0025">Alternative splicing</keyword>
<keyword id="KW-0903">Direct protein sequencing</keyword>
<keyword id="KW-0225">Disease variant</keyword>
<keyword id="KW-0256">Endoplasmic reticulum</keyword>
<keyword id="KW-0276">Fatty acid metabolism</keyword>
<keyword id="KW-0443">Lipid metabolism</keyword>
<keyword id="KW-0472">Membrane</keyword>
<keyword id="KW-0496">Mitochondrion</keyword>
<keyword id="KW-0999">Mitochondrion inner membrane</keyword>
<keyword id="KW-1000">Mitochondrion outer membrane</keyword>
<keyword id="KW-1267">Proteomics identification</keyword>
<keyword id="KW-1185">Reference proteome</keyword>
<keyword id="KW-0808">Transferase</keyword>
<keyword id="KW-0809">Transit peptide</keyword>
<sequence>MTILTYPFKNLPTASKWALRFSIRPLSCSSQLRAAPAVQTKTKKTLAKPNIRNVVVVDGVRTPFLLSGTSYKDLMPHDLARAALTGLLHRTSVPKEVVDYIIFGTVIQEVKTSNVAREAALGAGFSDKTPAHTVTMACISANQAMTTGVGLIASGQCDVIVAGGVELMSDVPIRHSRKMRKLMLDLNKAKSMGQRLSLISKFRFNFLAPELPAVSEFSTSETMGHSADRLAAAFAVSRLEQDEYALRSHSLAKKAQDEGLLSDVVPFKVPGKDTVTKDNGIRPSSLEQMAKLKPAFIKPYGTVTAANSSFLTDGASAMLIMAEEKALAMGYKPKAYLRDFMYVSQDPKDQLLLGPTYATPKVLEKAGLTMNDIDAFEFHEAFSGQILANFKAMDSDWFAENYMGRKTKVGLPPLEKFNNWGGSLSLGHPFGATGCRLVMAAANRLRKEGGQYGLVAACAAGGQGHAMIVEAYPK</sequence>
<accession>P55084</accession>
<accession>B2RB16</accession>
<accession>B4E2W0</accession>
<accession>O14969</accession>
<accession>Q53TA6</accession>
<accession>Q96C77</accession>
<accession>Q9H3F5</accession>
<accession>Q9T2V8</accession>
<gene>
    <name type="primary">HADHB</name>
    <name type="ORF">MSTP029</name>
</gene>
<feature type="transit peptide" description="Mitochondrion" evidence="2 23">
    <location>
        <begin position="1"/>
        <end position="33"/>
    </location>
</feature>
<feature type="chain" id="PRO_0000034080" description="Trifunctional enzyme subunit beta, mitochondrial">
    <location>
        <begin position="34"/>
        <end position="474"/>
    </location>
</feature>
<feature type="intramembrane region" evidence="20">
    <location>
        <begin position="173"/>
        <end position="220"/>
    </location>
</feature>
<feature type="active site" description="Acyl-thioester intermediate" evidence="21">
    <location>
        <position position="138"/>
    </location>
</feature>
<feature type="active site" description="Proton donor/acceptor" evidence="21">
    <location>
        <position position="458"/>
    </location>
</feature>
<feature type="site" description="Increases nucleophilicity of active site Cys" evidence="21">
    <location>
        <position position="428"/>
    </location>
</feature>
<feature type="modified residue" description="N6-acetyllysine; alternate" evidence="22">
    <location>
        <position position="72"/>
    </location>
</feature>
<feature type="modified residue" description="N6-succinyllysine; alternate" evidence="1">
    <location>
        <position position="72"/>
    </location>
</feature>
<feature type="modified residue" description="N6-acetyllysine; alternate" evidence="22">
    <location>
        <position position="188"/>
    </location>
</feature>
<feature type="modified residue" description="N6-succinyllysine; alternate" evidence="1">
    <location>
        <position position="188"/>
    </location>
</feature>
<feature type="modified residue" description="N6-succinyllysine" evidence="1">
    <location>
        <position position="190"/>
    </location>
</feature>
<feature type="modified residue" description="N6-succinyllysine" evidence="1">
    <location>
        <position position="272"/>
    </location>
</feature>
<feature type="modified residue" description="N6-succinyllysine" evidence="1">
    <location>
        <position position="291"/>
    </location>
</feature>
<feature type="modified residue" description="N6-acetyllysine; alternate" evidence="1">
    <location>
        <position position="293"/>
    </location>
</feature>
<feature type="modified residue" description="N6-succinyllysine; alternate" evidence="1">
    <location>
        <position position="293"/>
    </location>
</feature>
<feature type="modified residue" description="N6-acetyllysine" evidence="1">
    <location>
        <position position="298"/>
    </location>
</feature>
<feature type="modified residue" description="N6-acetyllysine; alternate" evidence="1">
    <location>
        <position position="332"/>
    </location>
</feature>
<feature type="modified residue" description="N6-succinyllysine; alternate" evidence="1">
    <location>
        <position position="332"/>
    </location>
</feature>
<feature type="modified residue" description="N6-acetyllysine" evidence="1">
    <location>
        <position position="348"/>
    </location>
</feature>
<feature type="modified residue" description="N6-acetyllysine" evidence="1">
    <location>
        <position position="361"/>
    </location>
</feature>
<feature type="splice variant" id="VSP_054426" description="In isoform 2." evidence="16">
    <original>MTILTYPFKNLPTASKWALRFSIRPLSCSSQLRAAP</original>
    <variation>MTLVSGWLLYGWII</variation>
    <location>
        <begin position="1"/>
        <end position="36"/>
    </location>
</feature>
<feature type="sequence variant" id="VAR_021128" description="In MTPD2; dbSNP:rs1671942605." evidence="3">
    <original>G</original>
    <variation>D</variation>
    <location>
        <position position="59"/>
    </location>
</feature>
<feature type="sequence variant" id="VAR_021129" description="In MTPD2; dbSNP:rs780351691." evidence="3">
    <original>R</original>
    <variation>C</variation>
    <location>
        <position position="61"/>
    </location>
</feature>
<feature type="sequence variant" id="VAR_007493" description="In MTPD2; dbSNP:rs121913132." evidence="3 14">
    <original>R</original>
    <variation>H</variation>
    <location>
        <position position="61"/>
    </location>
</feature>
<feature type="sequence variant" id="VAR_021130" description="In MTPD2." evidence="3">
    <original>R</original>
    <variation>G</variation>
    <location>
        <position position="117"/>
    </location>
</feature>
<feature type="sequence variant" id="VAR_035705" description="In a breast cancer sample; somatic mutation." evidence="6">
    <original>A</original>
    <variation>V</variation>
    <location>
        <position position="119"/>
    </location>
</feature>
<feature type="sequence variant" id="VAR_021131" description="In MTPD2; dbSNP:rs773127211." evidence="3">
    <original>L</original>
    <variation>P</variation>
    <location>
        <position position="121"/>
    </location>
</feature>
<feature type="sequence variant" id="VAR_021132" description="In MTPD2; dbSNP:rs371159065." evidence="3">
    <original>T</original>
    <variation>P</variation>
    <location>
        <position position="133"/>
    </location>
</feature>
<feature type="sequence variant" id="VAR_028231" description="In dbSNP:rs17851200." evidence="4">
    <original>P</original>
    <variation>S</variation>
    <location>
        <position position="209"/>
    </location>
</feature>
<feature type="sequence variant" id="VAR_021133" description="In MTPD2; dbSNP:rs1166120479." evidence="3">
    <original>D</original>
    <variation>G</variation>
    <location>
        <position position="242"/>
    </location>
</feature>
<feature type="sequence variant" id="VAR_007494" description="In MTPD2; dbSNP:rs121913133." evidence="3 14">
    <original>R</original>
    <variation>H</variation>
    <location>
        <position position="247"/>
    </location>
</feature>
<feature type="sequence variant" id="VAR_021134" description="In MTPD2." evidence="3">
    <location>
        <begin position="259"/>
        <end position="270"/>
    </location>
</feature>
<feature type="sequence variant" id="VAR_007495" description="In MTPD2; dbSNP:rs121913131." evidence="3 14">
    <original>D</original>
    <variation>G</variation>
    <location>
        <position position="263"/>
    </location>
</feature>
<feature type="sequence variant" id="VAR_061897" description="In dbSNP:rs57969630.">
    <original>K</original>
    <variation>R</variation>
    <location>
        <position position="277"/>
    </location>
</feature>
<feature type="sequence variant" id="VAR_021135" description="In MTPD2; dbSNP:rs751772298." evidence="3">
    <original>G</original>
    <variation>D</variation>
    <location>
        <position position="280"/>
    </location>
</feature>
<feature type="sequence variant" id="VAR_021136" description="In MTPD2." evidence="3">
    <original>P</original>
    <variation>L</variation>
    <location>
        <position position="294"/>
    </location>
</feature>
<feature type="sequence variant" id="VAR_021137" description="In MTPD2; dbSNP:rs1558357879." evidence="3">
    <original>P</original>
    <variation>R</variation>
    <location>
        <position position="294"/>
    </location>
</feature>
<feature type="sequence variant" id="VAR_021138" description="In MTPD2; dbSNP:rs891954464." evidence="3">
    <original>G</original>
    <variation>S</variation>
    <location>
        <position position="301"/>
    </location>
</feature>
<feature type="sequence variant" id="VAR_017409" description="In MTPD2; dbSNP:rs121913134." evidence="3 15">
    <original>R</original>
    <variation>K</variation>
    <location>
        <position position="444"/>
    </location>
</feature>
<feature type="sequence conflict" description="In Ref. 3; AAG39280 and 6; AAH14572/AAH17564/AAH30824/AAH66963." evidence="19" ref="3 6">
    <original>M</original>
    <variation>MT</variation>
    <location>
        <position position="1"/>
    </location>
</feature>
<proteinExistence type="evidence at protein level"/>
<reference key="1">
    <citation type="journal article" date="1994" name="Biochem. Biophys. Res. Commun.">
        <title>Structural analysis of cDNAs for subunits of human mitochondrial fatty acid beta-oxidation trifunctional protein.</title>
        <authorList>
            <person name="Kamijo T."/>
            <person name="Aoyama T."/>
            <person name="Komiyama A."/>
            <person name="Hashimoto T."/>
        </authorList>
    </citation>
    <scope>NUCLEOTIDE SEQUENCE [MRNA] (ISOFORM 1)</scope>
    <scope>FUNCTION</scope>
    <scope>CATALYTIC ACTIVITY</scope>
    <scope>PATHWAY</scope>
</reference>
<reference key="2">
    <citation type="journal article" date="1997" name="Hum. Mol. Genet.">
        <title>Genomic and mutational analysis of the mitochondrial trifunctional protein beta-subunit (HADHB) gene in patients with trifunctional protein deficiency.</title>
        <authorList>
            <person name="Orii K.E."/>
            <person name="Aoyama T."/>
            <person name="Wakui K."/>
            <person name="Fukushima Y."/>
            <person name="Miyajima H."/>
            <person name="Yamaguchi S."/>
            <person name="Orii T."/>
            <person name="Kondo N."/>
            <person name="Hashimoto T."/>
        </authorList>
    </citation>
    <scope>NUCLEOTIDE SEQUENCE [GENOMIC DNA]</scope>
    <scope>VARIANT MTPD2 LYS-444</scope>
    <source>
        <tissue>Blood</tissue>
    </source>
</reference>
<reference key="3">
    <citation type="submission" date="1998-12" db="EMBL/GenBank/DDBJ databases">
        <authorList>
            <person name="Liu B."/>
            <person name="Liu Y.Q."/>
            <person name="Wang X.Y."/>
            <person name="Zhao B."/>
            <person name="Sheng H."/>
            <person name="Zhao X.W."/>
            <person name="Liu S."/>
            <person name="Xu Y.Y."/>
            <person name="Ye J."/>
            <person name="Song L."/>
            <person name="Gao Y."/>
            <person name="Zhang C.L."/>
            <person name="Zhang J."/>
            <person name="Wei Y.J."/>
            <person name="Cao H.Q."/>
            <person name="Zhao Y."/>
            <person name="Liu L.S."/>
            <person name="Ding J.F."/>
            <person name="Gao R.L."/>
            <person name="Wu Q.Y."/>
            <person name="Qiang B.Q."/>
            <person name="Yuan J.G."/>
            <person name="Liew C.C."/>
            <person name="Zhao M.S."/>
            <person name="Hui R.T."/>
        </authorList>
    </citation>
    <scope>NUCLEOTIDE SEQUENCE [LARGE SCALE MRNA] (ISOFORM 1)</scope>
    <source>
        <tissue>Heart</tissue>
    </source>
</reference>
<reference key="4">
    <citation type="journal article" date="2004" name="Nat. Genet.">
        <title>Complete sequencing and characterization of 21,243 full-length human cDNAs.</title>
        <authorList>
            <person name="Ota T."/>
            <person name="Suzuki Y."/>
            <person name="Nishikawa T."/>
            <person name="Otsuki T."/>
            <person name="Sugiyama T."/>
            <person name="Irie R."/>
            <person name="Wakamatsu A."/>
            <person name="Hayashi K."/>
            <person name="Sato H."/>
            <person name="Nagai K."/>
            <person name="Kimura K."/>
            <person name="Makita H."/>
            <person name="Sekine M."/>
            <person name="Obayashi M."/>
            <person name="Nishi T."/>
            <person name="Shibahara T."/>
            <person name="Tanaka T."/>
            <person name="Ishii S."/>
            <person name="Yamamoto J."/>
            <person name="Saito K."/>
            <person name="Kawai Y."/>
            <person name="Isono Y."/>
            <person name="Nakamura Y."/>
            <person name="Nagahari K."/>
            <person name="Murakami K."/>
            <person name="Yasuda T."/>
            <person name="Iwayanagi T."/>
            <person name="Wagatsuma M."/>
            <person name="Shiratori A."/>
            <person name="Sudo H."/>
            <person name="Hosoiri T."/>
            <person name="Kaku Y."/>
            <person name="Kodaira H."/>
            <person name="Kondo H."/>
            <person name="Sugawara M."/>
            <person name="Takahashi M."/>
            <person name="Kanda K."/>
            <person name="Yokoi T."/>
            <person name="Furuya T."/>
            <person name="Kikkawa E."/>
            <person name="Omura Y."/>
            <person name="Abe K."/>
            <person name="Kamihara K."/>
            <person name="Katsuta N."/>
            <person name="Sato K."/>
            <person name="Tanikawa M."/>
            <person name="Yamazaki M."/>
            <person name="Ninomiya K."/>
            <person name="Ishibashi T."/>
            <person name="Yamashita H."/>
            <person name="Murakawa K."/>
            <person name="Fujimori K."/>
            <person name="Tanai H."/>
            <person name="Kimata M."/>
            <person name="Watanabe M."/>
            <person name="Hiraoka S."/>
            <person name="Chiba Y."/>
            <person name="Ishida S."/>
            <person name="Ono Y."/>
            <person name="Takiguchi S."/>
            <person name="Watanabe S."/>
            <person name="Yosida M."/>
            <person name="Hotuta T."/>
            <person name="Kusano J."/>
            <person name="Kanehori K."/>
            <person name="Takahashi-Fujii A."/>
            <person name="Hara H."/>
            <person name="Tanase T.-O."/>
            <person name="Nomura Y."/>
            <person name="Togiya S."/>
            <person name="Komai F."/>
            <person name="Hara R."/>
            <person name="Takeuchi K."/>
            <person name="Arita M."/>
            <person name="Imose N."/>
            <person name="Musashino K."/>
            <person name="Yuuki H."/>
            <person name="Oshima A."/>
            <person name="Sasaki N."/>
            <person name="Aotsuka S."/>
            <person name="Yoshikawa Y."/>
            <person name="Matsunawa H."/>
            <person name="Ichihara T."/>
            <person name="Shiohata N."/>
            <person name="Sano S."/>
            <person name="Moriya S."/>
            <person name="Momiyama H."/>
            <person name="Satoh N."/>
            <person name="Takami S."/>
            <person name="Terashima Y."/>
            <person name="Suzuki O."/>
            <person name="Nakagawa S."/>
            <person name="Senoh A."/>
            <person name="Mizoguchi H."/>
            <person name="Goto Y."/>
            <person name="Shimizu F."/>
            <person name="Wakebe H."/>
            <person name="Hishigaki H."/>
            <person name="Watanabe T."/>
            <person name="Sugiyama A."/>
            <person name="Takemoto M."/>
            <person name="Kawakami B."/>
            <person name="Yamazaki M."/>
            <person name="Watanabe K."/>
            <person name="Kumagai A."/>
            <person name="Itakura S."/>
            <person name="Fukuzumi Y."/>
            <person name="Fujimori Y."/>
            <person name="Komiyama M."/>
            <person name="Tashiro H."/>
            <person name="Tanigami A."/>
            <person name="Fujiwara T."/>
            <person name="Ono T."/>
            <person name="Yamada K."/>
            <person name="Fujii Y."/>
            <person name="Ozaki K."/>
            <person name="Hirao M."/>
            <person name="Ohmori Y."/>
            <person name="Kawabata A."/>
            <person name="Hikiji T."/>
            <person name="Kobatake N."/>
            <person name="Inagaki H."/>
            <person name="Ikema Y."/>
            <person name="Okamoto S."/>
            <person name="Okitani R."/>
            <person name="Kawakami T."/>
            <person name="Noguchi S."/>
            <person name="Itoh T."/>
            <person name="Shigeta K."/>
            <person name="Senba T."/>
            <person name="Matsumura K."/>
            <person name="Nakajima Y."/>
            <person name="Mizuno T."/>
            <person name="Morinaga M."/>
            <person name="Sasaki M."/>
            <person name="Togashi T."/>
            <person name="Oyama M."/>
            <person name="Hata H."/>
            <person name="Watanabe M."/>
            <person name="Komatsu T."/>
            <person name="Mizushima-Sugano J."/>
            <person name="Satoh T."/>
            <person name="Shirai Y."/>
            <person name="Takahashi Y."/>
            <person name="Nakagawa K."/>
            <person name="Okumura K."/>
            <person name="Nagase T."/>
            <person name="Nomura N."/>
            <person name="Kikuchi H."/>
            <person name="Masuho Y."/>
            <person name="Yamashita R."/>
            <person name="Nakai K."/>
            <person name="Yada T."/>
            <person name="Nakamura Y."/>
            <person name="Ohara O."/>
            <person name="Isogai T."/>
            <person name="Sugano S."/>
        </authorList>
    </citation>
    <scope>NUCLEOTIDE SEQUENCE [LARGE SCALE MRNA] (ISOFORMS 1 AND 2)</scope>
    <source>
        <tissue>Stomach</tissue>
        <tissue>Tongue</tissue>
    </source>
</reference>
<reference key="5">
    <citation type="journal article" date="2005" name="Nature">
        <title>Generation and annotation of the DNA sequences of human chromosomes 2 and 4.</title>
        <authorList>
            <person name="Hillier L.W."/>
            <person name="Graves T.A."/>
            <person name="Fulton R.S."/>
            <person name="Fulton L.A."/>
            <person name="Pepin K.H."/>
            <person name="Minx P."/>
            <person name="Wagner-McPherson C."/>
            <person name="Layman D."/>
            <person name="Wylie K."/>
            <person name="Sekhon M."/>
            <person name="Becker M.C."/>
            <person name="Fewell G.A."/>
            <person name="Delehaunty K.D."/>
            <person name="Miner T.L."/>
            <person name="Nash W.E."/>
            <person name="Kremitzki C."/>
            <person name="Oddy L."/>
            <person name="Du H."/>
            <person name="Sun H."/>
            <person name="Bradshaw-Cordum H."/>
            <person name="Ali J."/>
            <person name="Carter J."/>
            <person name="Cordes M."/>
            <person name="Harris A."/>
            <person name="Isak A."/>
            <person name="van Brunt A."/>
            <person name="Nguyen C."/>
            <person name="Du F."/>
            <person name="Courtney L."/>
            <person name="Kalicki J."/>
            <person name="Ozersky P."/>
            <person name="Abbott S."/>
            <person name="Armstrong J."/>
            <person name="Belter E.A."/>
            <person name="Caruso L."/>
            <person name="Cedroni M."/>
            <person name="Cotton M."/>
            <person name="Davidson T."/>
            <person name="Desai A."/>
            <person name="Elliott G."/>
            <person name="Erb T."/>
            <person name="Fronick C."/>
            <person name="Gaige T."/>
            <person name="Haakenson W."/>
            <person name="Haglund K."/>
            <person name="Holmes A."/>
            <person name="Harkins R."/>
            <person name="Kim K."/>
            <person name="Kruchowski S.S."/>
            <person name="Strong C.M."/>
            <person name="Grewal N."/>
            <person name="Goyea E."/>
            <person name="Hou S."/>
            <person name="Levy A."/>
            <person name="Martinka S."/>
            <person name="Mead K."/>
            <person name="McLellan M.D."/>
            <person name="Meyer R."/>
            <person name="Randall-Maher J."/>
            <person name="Tomlinson C."/>
            <person name="Dauphin-Kohlberg S."/>
            <person name="Kozlowicz-Reilly A."/>
            <person name="Shah N."/>
            <person name="Swearengen-Shahid S."/>
            <person name="Snider J."/>
            <person name="Strong J.T."/>
            <person name="Thompson J."/>
            <person name="Yoakum M."/>
            <person name="Leonard S."/>
            <person name="Pearman C."/>
            <person name="Trani L."/>
            <person name="Radionenko M."/>
            <person name="Waligorski J.E."/>
            <person name="Wang C."/>
            <person name="Rock S.M."/>
            <person name="Tin-Wollam A.-M."/>
            <person name="Maupin R."/>
            <person name="Latreille P."/>
            <person name="Wendl M.C."/>
            <person name="Yang S.-P."/>
            <person name="Pohl C."/>
            <person name="Wallis J.W."/>
            <person name="Spieth J."/>
            <person name="Bieri T.A."/>
            <person name="Berkowicz N."/>
            <person name="Nelson J.O."/>
            <person name="Osborne J."/>
            <person name="Ding L."/>
            <person name="Meyer R."/>
            <person name="Sabo A."/>
            <person name="Shotland Y."/>
            <person name="Sinha P."/>
            <person name="Wohldmann P.E."/>
            <person name="Cook L.L."/>
            <person name="Hickenbotham M.T."/>
            <person name="Eldred J."/>
            <person name="Williams D."/>
            <person name="Jones T.A."/>
            <person name="She X."/>
            <person name="Ciccarelli F.D."/>
            <person name="Izaurralde E."/>
            <person name="Taylor J."/>
            <person name="Schmutz J."/>
            <person name="Myers R.M."/>
            <person name="Cox D.R."/>
            <person name="Huang X."/>
            <person name="McPherson J.D."/>
            <person name="Mardis E.R."/>
            <person name="Clifton S.W."/>
            <person name="Warren W.C."/>
            <person name="Chinwalla A.T."/>
            <person name="Eddy S.R."/>
            <person name="Marra M.A."/>
            <person name="Ovcharenko I."/>
            <person name="Furey T.S."/>
            <person name="Miller W."/>
            <person name="Eichler E.E."/>
            <person name="Bork P."/>
            <person name="Suyama M."/>
            <person name="Torrents D."/>
            <person name="Waterston R.H."/>
            <person name="Wilson R.K."/>
        </authorList>
    </citation>
    <scope>NUCLEOTIDE SEQUENCE [LARGE SCALE GENOMIC DNA]</scope>
</reference>
<reference key="6">
    <citation type="journal article" date="2004" name="Genome Res.">
        <title>The status, quality, and expansion of the NIH full-length cDNA project: the Mammalian Gene Collection (MGC).</title>
        <authorList>
            <consortium name="The MGC Project Team"/>
        </authorList>
    </citation>
    <scope>NUCLEOTIDE SEQUENCE [LARGE SCALE MRNA] (ISOFORM 1)</scope>
    <scope>VARIANT SER-209</scope>
    <source>
        <tissue>Colon</tissue>
        <tissue>Hypothalamus</tissue>
        <tissue>Skeletal muscle</tissue>
        <tissue>Urinary bladder</tissue>
    </source>
</reference>
<reference key="7">
    <citation type="journal article" date="2003" name="Nat. Biotechnol.">
        <title>Exploring proteomes and analyzing protein processing by mass spectrometric identification of sorted N-terminal peptides.</title>
        <authorList>
            <person name="Gevaert K."/>
            <person name="Goethals M."/>
            <person name="Martens L."/>
            <person name="Van Damme J."/>
            <person name="Staes A."/>
            <person name="Thomas G.R."/>
            <person name="Vandekerckhove J."/>
        </authorList>
    </citation>
    <scope>PROTEIN SEQUENCE OF 34-52</scope>
    <source>
        <tissue>Platelet</tissue>
    </source>
</reference>
<reference key="8">
    <citation type="journal article" date="1994" name="Biochem. Soc. Trans.">
        <title>The mitochondrial long-chain trifunctional enzyme: 2-enoyl-CoA hydratase, 3-hydroxyacyl-CoA dehydrogenase and 3-oxoacyl-CoA thiolase.</title>
        <authorList>
            <person name="Middleton B."/>
        </authorList>
    </citation>
    <scope>PROTEIN SEQUENCE OF 48-63</scope>
    <scope>CATALYTIC ACTIVITY</scope>
    <source>
        <tissue>Liver</tissue>
    </source>
</reference>
<reference key="9">
    <citation type="journal article" date="2004" name="Biochem. J.">
        <title>Vectorial proteomics reveal targeting, phosphorylation and specific fragmentation of polymerase I and transcript release factor (PTRF) at the surface of caveolae in human adipocytes.</title>
        <authorList>
            <person name="Aboulaich N."/>
            <person name="Vainonen J.P."/>
            <person name="Stralfors P."/>
            <person name="Vener A.V."/>
        </authorList>
    </citation>
    <scope>PROTEIN SEQUENCE OF 62-72 AND 96-111</scope>
    <source>
        <tissue>Adipocyte</tissue>
    </source>
</reference>
<reference key="10">
    <citation type="journal article" date="1992" name="Biochem. Biophys. Res. Commun.">
        <title>Human liver long-chain 3-hydroxyacyl-coenzyme A dehydrogenase is a multifunctional membrane-bound beta-oxidation enzyme of mitochondria.</title>
        <authorList>
            <person name="Carpenter K."/>
            <person name="Pollitt R.J."/>
            <person name="Middleton B."/>
        </authorList>
    </citation>
    <scope>CATALYTIC ACTIVITY</scope>
</reference>
<reference key="11">
    <citation type="journal article" date="1994" name="J. Clin. Invest.">
        <title>Mitochondrial trifunctional protein deficiency. Catalytic heterogeneity of the mutant enzyme in two patients.</title>
        <authorList>
            <person name="Kamijo T."/>
            <person name="Wanders R.J."/>
            <person name="Saudubray J.-M."/>
            <person name="Aoyama T."/>
            <person name="Komiyama A."/>
            <person name="Hashimoto T."/>
        </authorList>
    </citation>
    <scope>CATALYTIC ACTIVITY</scope>
    <scope>SUBUNIT</scope>
</reference>
<reference key="12">
    <citation type="journal article" date="2009" name="Science">
        <title>Lysine acetylation targets protein complexes and co-regulates major cellular functions.</title>
        <authorList>
            <person name="Choudhary C."/>
            <person name="Kumar C."/>
            <person name="Gnad F."/>
            <person name="Nielsen M.L."/>
            <person name="Rehman M."/>
            <person name="Walther T.C."/>
            <person name="Olsen J.V."/>
            <person name="Mann M."/>
        </authorList>
    </citation>
    <scope>ACETYLATION [LARGE SCALE ANALYSIS] AT LYS-72 AND LYS-188</scope>
    <scope>IDENTIFICATION BY MASS SPECTROMETRY [LARGE SCALE ANALYSIS]</scope>
</reference>
<reference key="13">
    <citation type="journal article" date="2011" name="BMC Syst. Biol.">
        <title>Initial characterization of the human central proteome.</title>
        <authorList>
            <person name="Burkard T.R."/>
            <person name="Planyavsky M."/>
            <person name="Kaupe I."/>
            <person name="Breitwieser F.P."/>
            <person name="Buerckstuemmer T."/>
            <person name="Bennett K.L."/>
            <person name="Superti-Furga G."/>
            <person name="Colinge J."/>
        </authorList>
    </citation>
    <scope>IDENTIFICATION BY MASS SPECTROMETRY [LARGE SCALE ANALYSIS]</scope>
</reference>
<reference key="14">
    <citation type="journal article" date="2011" name="Science">
        <title>Human cytomegalovirus directly induces the antiviral protein viperin to enhance infectivity.</title>
        <authorList>
            <person name="Seo J.Y."/>
            <person name="Yaneva R."/>
            <person name="Hinson E.R."/>
            <person name="Cresswell P."/>
        </authorList>
    </citation>
    <scope>IDENTIFICATION BY MASS SPECTROMETRY</scope>
    <scope>SUBCELLULAR LOCATION</scope>
    <scope>INTERACTION WITH RSAD2</scope>
</reference>
<reference key="15">
    <citation type="journal article" date="2014" name="J. Proteomics">
        <title>An enzyme assisted RP-RPLC approach for in-depth analysis of human liver phosphoproteome.</title>
        <authorList>
            <person name="Bian Y."/>
            <person name="Song C."/>
            <person name="Cheng K."/>
            <person name="Dong M."/>
            <person name="Wang F."/>
            <person name="Huang J."/>
            <person name="Sun D."/>
            <person name="Wang L."/>
            <person name="Ye M."/>
            <person name="Zou H."/>
        </authorList>
    </citation>
    <scope>IDENTIFICATION BY MASS SPECTROMETRY [LARGE SCALE ANALYSIS]</scope>
    <source>
        <tissue>Liver</tissue>
    </source>
</reference>
<reference key="16">
    <citation type="journal article" date="2015" name="Proteomics">
        <title>N-terminome analysis of the human mitochondrial proteome.</title>
        <authorList>
            <person name="Vaca Jacome A.S."/>
            <person name="Rabilloud T."/>
            <person name="Schaeffer-Reiss C."/>
            <person name="Rompais M."/>
            <person name="Ayoub D."/>
            <person name="Lane L."/>
            <person name="Bairoch A."/>
            <person name="Van Dorsselaer A."/>
            <person name="Carapito C."/>
        </authorList>
    </citation>
    <scope>CLEAVAGE OF TRANSIT PEPTIDE [LARGE SCALE ANALYSIS] AFTER ARG-33</scope>
    <scope>IDENTIFICATION BY MASS SPECTROMETRY [LARGE SCALE ANALYSIS]</scope>
</reference>
<reference key="17">
    <citation type="journal article" date="2018" name="Proc. Natl. Acad. Sci. U.S.A.">
        <title>Cryo-EM structure of human mitochondrial trifunctional protein.</title>
        <authorList>
            <person name="Liang K."/>
            <person name="Li N."/>
            <person name="Wang X."/>
            <person name="Dai J."/>
            <person name="Liu P."/>
            <person name="Wang C."/>
            <person name="Chen X.W."/>
            <person name="Gao N."/>
            <person name="Xiao J."/>
        </authorList>
    </citation>
    <scope>STRUCTURE BY ELECTRON MICROSCOPY (4.20 ANGSTROMS)</scope>
    <scope>FUNCTION</scope>
    <scope>SUBUNIT</scope>
    <scope>SUBCELLULAR LOCATION</scope>
    <scope>TOPOLOGY</scope>
</reference>
<reference key="18">
    <citation type="journal article" date="2020" name="Stem Cell Reports">
        <title>Mitoregulin Controls beta-Oxidation in Human and Mouse Adipocytes.</title>
        <authorList>
            <person name="Friesen M."/>
            <person name="Warren C.R."/>
            <person name="Yu H."/>
            <person name="Toyohara T."/>
            <person name="Ding Q."/>
            <person name="Florido M.H.C."/>
            <person name="Sayre C."/>
            <person name="Pope B.D."/>
            <person name="Goff L.A."/>
            <person name="Rinn J.L."/>
            <person name="Cowan C.A."/>
        </authorList>
    </citation>
    <scope>INTERACTION WITH MTLN</scope>
</reference>
<reference key="19">
    <citation type="journal article" date="2019" name="Proc. Natl. Acad. Sci. U.S.A.">
        <title>Crystal structure of human mitochondrial trifunctional protein, a fatty acid beta-oxidation metabolon.</title>
        <authorList>
            <person name="Xia C."/>
            <person name="Fu Z."/>
            <person name="Battaile K.P."/>
            <person name="Kim J.P."/>
        </authorList>
    </citation>
    <scope>X-RAY CRYSTALLOGRAPHY (3.60 ANGSTROMS) OF 34-474</scope>
    <scope>FUNCTION</scope>
    <scope>SUBUNIT</scope>
    <scope>ACTIVE SITE</scope>
</reference>
<reference key="20">
    <citation type="journal article" date="1996" name="Am. J. Hum. Genet.">
        <title>Molecular characterization of mitochondrial trifunctional protein deficiency: formation of the enzyme complex is important for stabilization of both alpha- and beta-subunits.</title>
        <authorList>
            <person name="Ushikubo S."/>
            <person name="Aoyama T."/>
            <person name="Kamijo T."/>
            <person name="Wanders R.J.A."/>
            <person name="Rinaldo P."/>
            <person name="Vockley J."/>
            <person name="Hashimoto T."/>
        </authorList>
    </citation>
    <scope>VARIANTS MTPD2 HIS-61; HIS-247 AND GLY-263</scope>
    <scope>CATALYTIC ACTIVITY</scope>
</reference>
<reference key="21">
    <citation type="journal article" date="2003" name="Hum. Mutat.">
        <title>Molecular and phenotypic heterogeneity in mitochondrial trifunctional protein deficiency due to beta-subunit mutations.</title>
        <authorList>
            <person name="Spiekerkoetter U."/>
            <person name="Sun B."/>
            <person name="Khuchua Z."/>
            <person name="Bennett M.J."/>
            <person name="Strauss A.W."/>
        </authorList>
    </citation>
    <scope>VARIANTS MTPD2 ASP-59; CYS-61; HIS-61; GLY-117; PRO-121; PRO-133; GLY-242; HIS-247; 259-GLY--PRO-270 DEL; GLY-263; ASP-280; ARG-294; LEU-294; SER-301 AND LYS-444</scope>
</reference>
<reference key="22">
    <citation type="journal article" date="2006" name="Science">
        <title>The consensus coding sequences of human breast and colorectal cancers.</title>
        <authorList>
            <person name="Sjoeblom T."/>
            <person name="Jones S."/>
            <person name="Wood L.D."/>
            <person name="Parsons D.W."/>
            <person name="Lin J."/>
            <person name="Barber T.D."/>
            <person name="Mandelker D."/>
            <person name="Leary R.J."/>
            <person name="Ptak J."/>
            <person name="Silliman N."/>
            <person name="Szabo S."/>
            <person name="Buckhaults P."/>
            <person name="Farrell C."/>
            <person name="Meeh P."/>
            <person name="Markowitz S.D."/>
            <person name="Willis J."/>
            <person name="Dawson D."/>
            <person name="Willson J.K.V."/>
            <person name="Gazdar A.F."/>
            <person name="Hartigan J."/>
            <person name="Wu L."/>
            <person name="Liu C."/>
            <person name="Parmigiani G."/>
            <person name="Park B.H."/>
            <person name="Bachman K.E."/>
            <person name="Papadopoulos N."/>
            <person name="Vogelstein B."/>
            <person name="Kinzler K.W."/>
            <person name="Velculescu V.E."/>
        </authorList>
    </citation>
    <scope>VARIANT [LARGE SCALE ANALYSIS] VAL-119</scope>
</reference>